<dbReference type="EMBL" id="HM031116">
    <property type="protein sequence ID" value="ADM47406.1"/>
    <property type="molecule type" value="mRNA"/>
</dbReference>
<dbReference type="EMBL" id="BX571673">
    <property type="status" value="NOT_ANNOTATED_CDS"/>
    <property type="molecule type" value="Genomic_DNA"/>
</dbReference>
<dbReference type="CCDS" id="CCDS81433.1"/>
<dbReference type="RefSeq" id="NP_001277622.1">
    <property type="nucleotide sequence ID" value="NM_001290693.1"/>
</dbReference>
<dbReference type="PDB" id="5K7B">
    <property type="method" value="X-ray"/>
    <property type="resolution" value="2.30 A"/>
    <property type="chains" value="A/B/C/D=158-250"/>
</dbReference>
<dbReference type="PDB" id="5K9L">
    <property type="method" value="X-ray"/>
    <property type="resolution" value="2.52 A"/>
    <property type="chains" value="A/B/C/D=158-250"/>
</dbReference>
<dbReference type="PDB" id="8GT9">
    <property type="method" value="X-ray"/>
    <property type="resolution" value="2.00 A"/>
    <property type="chains" value="A/B/C/D=157-248"/>
</dbReference>
<dbReference type="PDB" id="8GU7">
    <property type="method" value="X-ray"/>
    <property type="resolution" value="2.60 A"/>
    <property type="chains" value="C/D=157-248"/>
</dbReference>
<dbReference type="PDBsum" id="5K7B"/>
<dbReference type="PDBsum" id="5K9L"/>
<dbReference type="PDBsum" id="8GT9"/>
<dbReference type="PDBsum" id="8GU7"/>
<dbReference type="SMR" id="A8MW95"/>
<dbReference type="BioGRID" id="137882">
    <property type="interactions" value="10"/>
</dbReference>
<dbReference type="FunCoup" id="A8MW95">
    <property type="interactions" value="253"/>
</dbReference>
<dbReference type="IntAct" id="A8MW95">
    <property type="interactions" value="38"/>
</dbReference>
<dbReference type="STRING" id="9606.ENSP00000488361"/>
<dbReference type="GlyGen" id="A8MW95">
    <property type="glycosylation" value="1 site"/>
</dbReference>
<dbReference type="iPTMnet" id="A8MW95"/>
<dbReference type="PhosphoSitePlus" id="A8MW95"/>
<dbReference type="BioMuta" id="BECN2"/>
<dbReference type="MassIVE" id="A8MW95"/>
<dbReference type="Antibodypedia" id="77840">
    <property type="antibodies" value="293 antibodies from 17 providers"/>
</dbReference>
<dbReference type="DNASU" id="441925"/>
<dbReference type="Ensembl" id="ENST00000419583.2">
    <property type="protein sequence ID" value="ENSP00000488361.1"/>
    <property type="gene ID" value="ENSG00000196289.7"/>
</dbReference>
<dbReference type="GeneID" id="441925"/>
<dbReference type="KEGG" id="hsa:441925"/>
<dbReference type="MANE-Select" id="ENST00000419583.2">
    <property type="protein sequence ID" value="ENSP00000488361.1"/>
    <property type="RefSeq nucleotide sequence ID" value="NM_001290693.1"/>
    <property type="RefSeq protein sequence ID" value="NP_001277622.1"/>
</dbReference>
<dbReference type="AGR" id="HGNC:38606"/>
<dbReference type="CTD" id="441925"/>
<dbReference type="DisGeNET" id="441925"/>
<dbReference type="GeneCards" id="BECN2"/>
<dbReference type="HGNC" id="HGNC:38606">
    <property type="gene designation" value="BECN2"/>
</dbReference>
<dbReference type="HPA" id="ENSG00000196289">
    <property type="expression patterns" value="Not detected"/>
</dbReference>
<dbReference type="MIM" id="615687">
    <property type="type" value="gene"/>
</dbReference>
<dbReference type="neXtProt" id="NX_A8MW95"/>
<dbReference type="OpenTargets" id="ENSG00000196289"/>
<dbReference type="VEuPathDB" id="HostDB:ENSG00000196289"/>
<dbReference type="GeneTree" id="ENSGT00390000008164"/>
<dbReference type="HOGENOM" id="CLU_024219_4_1_1"/>
<dbReference type="InParanoid" id="A8MW95"/>
<dbReference type="OMA" id="TATFEIW"/>
<dbReference type="OrthoDB" id="20368at2759"/>
<dbReference type="PAN-GO" id="A8MW95">
    <property type="GO annotations" value="6 GO annotations based on evolutionary models"/>
</dbReference>
<dbReference type="PathwayCommons" id="A8MW95"/>
<dbReference type="SignaLink" id="A8MW95"/>
<dbReference type="BioGRID-ORCS" id="441925">
    <property type="hits" value="3 hits in 127 CRISPR screens"/>
</dbReference>
<dbReference type="GenomeRNAi" id="441925"/>
<dbReference type="Pharos" id="A8MW95">
    <property type="development level" value="Tbio"/>
</dbReference>
<dbReference type="PRO" id="PR:A8MW95"/>
<dbReference type="Proteomes" id="UP000005640">
    <property type="component" value="Chromosome 1"/>
</dbReference>
<dbReference type="RNAct" id="A8MW95">
    <property type="molecule type" value="protein"/>
</dbReference>
<dbReference type="GO" id="GO:0000407">
    <property type="term" value="C:phagophore assembly site"/>
    <property type="evidence" value="ECO:0000318"/>
    <property type="project" value="GO_Central"/>
</dbReference>
<dbReference type="GO" id="GO:0034271">
    <property type="term" value="C:phosphatidylinositol 3-kinase complex, class III, type I"/>
    <property type="evidence" value="ECO:0000318"/>
    <property type="project" value="GO_Central"/>
</dbReference>
<dbReference type="GO" id="GO:0034272">
    <property type="term" value="C:phosphatidylinositol 3-kinase complex, class III, type II"/>
    <property type="evidence" value="ECO:0000318"/>
    <property type="project" value="GO_Central"/>
</dbReference>
<dbReference type="GO" id="GO:0043548">
    <property type="term" value="F:phosphatidylinositol 3-kinase binding"/>
    <property type="evidence" value="ECO:0000318"/>
    <property type="project" value="GO_Central"/>
</dbReference>
<dbReference type="GO" id="GO:0044877">
    <property type="term" value="F:protein-containing complex binding"/>
    <property type="evidence" value="ECO:0007669"/>
    <property type="project" value="Ensembl"/>
</dbReference>
<dbReference type="GO" id="GO:0030674">
    <property type="term" value="F:protein-macromolecule adaptor activity"/>
    <property type="evidence" value="ECO:0000318"/>
    <property type="project" value="GO_Central"/>
</dbReference>
<dbReference type="GO" id="GO:0000045">
    <property type="term" value="P:autophagosome assembly"/>
    <property type="evidence" value="ECO:0000318"/>
    <property type="project" value="GO_Central"/>
</dbReference>
<dbReference type="GO" id="GO:0006914">
    <property type="term" value="P:autophagy"/>
    <property type="evidence" value="ECO:0000315"/>
    <property type="project" value="UniProtKB"/>
</dbReference>
<dbReference type="GO" id="GO:0006995">
    <property type="term" value="P:cellular response to nitrogen starvation"/>
    <property type="evidence" value="ECO:0000318"/>
    <property type="project" value="GO_Central"/>
</dbReference>
<dbReference type="GO" id="GO:0008333">
    <property type="term" value="P:endosome to lysosome transport"/>
    <property type="evidence" value="ECO:0000315"/>
    <property type="project" value="UniProtKB"/>
</dbReference>
<dbReference type="GO" id="GO:1990172">
    <property type="term" value="P:G protein-coupled receptor catabolic process"/>
    <property type="evidence" value="ECO:0000315"/>
    <property type="project" value="UniProtKB"/>
</dbReference>
<dbReference type="GO" id="GO:0042593">
    <property type="term" value="P:glucose homeostasis"/>
    <property type="evidence" value="ECO:0007669"/>
    <property type="project" value="Ensembl"/>
</dbReference>
<dbReference type="GO" id="GO:0045324">
    <property type="term" value="P:late endosome to vacuole transport"/>
    <property type="evidence" value="ECO:0000318"/>
    <property type="project" value="GO_Central"/>
</dbReference>
<dbReference type="GO" id="GO:0000423">
    <property type="term" value="P:mitophagy"/>
    <property type="evidence" value="ECO:0000318"/>
    <property type="project" value="GO_Central"/>
</dbReference>
<dbReference type="FunFam" id="1.10.418.40:FF:000001">
    <property type="entry name" value="beclin-1 isoform X1"/>
    <property type="match status" value="1"/>
</dbReference>
<dbReference type="Gene3D" id="6.10.250.3110">
    <property type="match status" value="1"/>
</dbReference>
<dbReference type="Gene3D" id="1.10.418.40">
    <property type="entry name" value="Autophagy protein 6/Beclin 1"/>
    <property type="match status" value="1"/>
</dbReference>
<dbReference type="InterPro" id="IPR007243">
    <property type="entry name" value="Atg6/Beclin"/>
</dbReference>
<dbReference type="InterPro" id="IPR038274">
    <property type="entry name" value="Atg6/Beclin_C_sf"/>
</dbReference>
<dbReference type="InterPro" id="IPR041691">
    <property type="entry name" value="Atg6/beclin_CC"/>
</dbReference>
<dbReference type="InterPro" id="IPR040455">
    <property type="entry name" value="Atg6_BARA"/>
</dbReference>
<dbReference type="PANTHER" id="PTHR12768">
    <property type="entry name" value="BECLIN 1"/>
    <property type="match status" value="1"/>
</dbReference>
<dbReference type="PANTHER" id="PTHR12768:SF5">
    <property type="entry name" value="BECLIN-2"/>
    <property type="match status" value="1"/>
</dbReference>
<dbReference type="Pfam" id="PF04111">
    <property type="entry name" value="APG6"/>
    <property type="match status" value="1"/>
</dbReference>
<dbReference type="Pfam" id="PF17675">
    <property type="entry name" value="APG6_N"/>
    <property type="match status" value="1"/>
</dbReference>
<gene>
    <name evidence="5 7" type="primary">BECN2</name>
    <name evidence="8" type="synonym">BECN1L1</name>
    <name type="synonym">BECN1P1</name>
</gene>
<name>BECN2_HUMAN</name>
<evidence type="ECO:0000255" key="1"/>
<evidence type="ECO:0000256" key="2">
    <source>
        <dbReference type="SAM" id="MobiDB-lite"/>
    </source>
</evidence>
<evidence type="ECO:0000269" key="3">
    <source>
    </source>
</evidence>
<evidence type="ECO:0000269" key="4">
    <source>
    </source>
</evidence>
<evidence type="ECO:0000303" key="5">
    <source>
    </source>
</evidence>
<evidence type="ECO:0000305" key="6"/>
<evidence type="ECO:0000312" key="7">
    <source>
        <dbReference type="HGNC" id="HGNC:38606"/>
    </source>
</evidence>
<evidence type="ECO:0000312" key="8">
    <source>
        <dbReference type="MIM" id="615687"/>
    </source>
</evidence>
<evidence type="ECO:0007829" key="9">
    <source>
        <dbReference type="PDB" id="8GT9"/>
    </source>
</evidence>
<organism>
    <name type="scientific">Homo sapiens</name>
    <name type="common">Human</name>
    <dbReference type="NCBI Taxonomy" id="9606"/>
    <lineage>
        <taxon>Eukaryota</taxon>
        <taxon>Metazoa</taxon>
        <taxon>Chordata</taxon>
        <taxon>Craniata</taxon>
        <taxon>Vertebrata</taxon>
        <taxon>Euteleostomi</taxon>
        <taxon>Mammalia</taxon>
        <taxon>Eutheria</taxon>
        <taxon>Euarchontoglires</taxon>
        <taxon>Primates</taxon>
        <taxon>Haplorrhini</taxon>
        <taxon>Catarrhini</taxon>
        <taxon>Hominidae</taxon>
        <taxon>Homo</taxon>
    </lineage>
</organism>
<keyword id="KW-0002">3D-structure</keyword>
<keyword id="KW-0072">Autophagy</keyword>
<keyword id="KW-0175">Coiled coil</keyword>
<keyword id="KW-0963">Cytoplasm</keyword>
<keyword id="KW-1185">Reference proteome</keyword>
<protein>
    <recommendedName>
        <fullName evidence="5">Beclin-2</fullName>
    </recommendedName>
    <alternativeName>
        <fullName evidence="7">Beclin-1 autophagy-related pseudogene 1</fullName>
    </alternativeName>
    <alternativeName>
        <fullName evidence="8">Beclin-1-like protein 1</fullName>
    </alternativeName>
</protein>
<accession>A8MW95</accession>
<accession>E9KNW0</accession>
<reference key="1">
    <citation type="journal article" date="2013" name="Cell">
        <title>Beclin 2 functions in autophagy, degradation of G protein-coupled receptors, and metabolism.</title>
        <authorList>
            <person name="He C."/>
            <person name="Wei Y."/>
            <person name="Sun K."/>
            <person name="Li B."/>
            <person name="Dong X."/>
            <person name="Zou Z."/>
            <person name="Liu Y."/>
            <person name="Kinch L.N."/>
            <person name="Khan S."/>
            <person name="Sinha S."/>
            <person name="Xavier R.J."/>
            <person name="Grishin N.V."/>
            <person name="Xiao G."/>
            <person name="Eskelinen E.L."/>
            <person name="Scherer P.E."/>
            <person name="Whistler J.L."/>
            <person name="Levine B."/>
        </authorList>
    </citation>
    <scope>NUCLEOTIDE SEQUENCE [MRNA]</scope>
    <scope>FUNCTION</scope>
    <scope>INTERACTION WITH ATG14; AMBRA1; GPRASP1; UVRAG AND PIK3C3</scope>
    <scope>TISSUE SPECIFICITY</scope>
    <scope>MUTAGENESIS OF ILE-80</scope>
</reference>
<reference key="2">
    <citation type="journal article" date="2006" name="Nature">
        <title>The DNA sequence and biological annotation of human chromosome 1.</title>
        <authorList>
            <person name="Gregory S.G."/>
            <person name="Barlow K.F."/>
            <person name="McLay K.E."/>
            <person name="Kaul R."/>
            <person name="Swarbreck D."/>
            <person name="Dunham A."/>
            <person name="Scott C.E."/>
            <person name="Howe K.L."/>
            <person name="Woodfine K."/>
            <person name="Spencer C.C.A."/>
            <person name="Jones M.C."/>
            <person name="Gillson C."/>
            <person name="Searle S."/>
            <person name="Zhou Y."/>
            <person name="Kokocinski F."/>
            <person name="McDonald L."/>
            <person name="Evans R."/>
            <person name="Phillips K."/>
            <person name="Atkinson A."/>
            <person name="Cooper R."/>
            <person name="Jones C."/>
            <person name="Hall R.E."/>
            <person name="Andrews T.D."/>
            <person name="Lloyd C."/>
            <person name="Ainscough R."/>
            <person name="Almeida J.P."/>
            <person name="Ambrose K.D."/>
            <person name="Anderson F."/>
            <person name="Andrew R.W."/>
            <person name="Ashwell R.I.S."/>
            <person name="Aubin K."/>
            <person name="Babbage A.K."/>
            <person name="Bagguley C.L."/>
            <person name="Bailey J."/>
            <person name="Beasley H."/>
            <person name="Bethel G."/>
            <person name="Bird C.P."/>
            <person name="Bray-Allen S."/>
            <person name="Brown J.Y."/>
            <person name="Brown A.J."/>
            <person name="Buckley D."/>
            <person name="Burton J."/>
            <person name="Bye J."/>
            <person name="Carder C."/>
            <person name="Chapman J.C."/>
            <person name="Clark S.Y."/>
            <person name="Clarke G."/>
            <person name="Clee C."/>
            <person name="Cobley V."/>
            <person name="Collier R.E."/>
            <person name="Corby N."/>
            <person name="Coville G.J."/>
            <person name="Davies J."/>
            <person name="Deadman R."/>
            <person name="Dunn M."/>
            <person name="Earthrowl M."/>
            <person name="Ellington A.G."/>
            <person name="Errington H."/>
            <person name="Frankish A."/>
            <person name="Frankland J."/>
            <person name="French L."/>
            <person name="Garner P."/>
            <person name="Garnett J."/>
            <person name="Gay L."/>
            <person name="Ghori M.R.J."/>
            <person name="Gibson R."/>
            <person name="Gilby L.M."/>
            <person name="Gillett W."/>
            <person name="Glithero R.J."/>
            <person name="Grafham D.V."/>
            <person name="Griffiths C."/>
            <person name="Griffiths-Jones S."/>
            <person name="Grocock R."/>
            <person name="Hammond S."/>
            <person name="Harrison E.S.I."/>
            <person name="Hart E."/>
            <person name="Haugen E."/>
            <person name="Heath P.D."/>
            <person name="Holmes S."/>
            <person name="Holt K."/>
            <person name="Howden P.J."/>
            <person name="Hunt A.R."/>
            <person name="Hunt S.E."/>
            <person name="Hunter G."/>
            <person name="Isherwood J."/>
            <person name="James R."/>
            <person name="Johnson C."/>
            <person name="Johnson D."/>
            <person name="Joy A."/>
            <person name="Kay M."/>
            <person name="Kershaw J.K."/>
            <person name="Kibukawa M."/>
            <person name="Kimberley A.M."/>
            <person name="King A."/>
            <person name="Knights A.J."/>
            <person name="Lad H."/>
            <person name="Laird G."/>
            <person name="Lawlor S."/>
            <person name="Leongamornlert D.A."/>
            <person name="Lloyd D.M."/>
            <person name="Loveland J."/>
            <person name="Lovell J."/>
            <person name="Lush M.J."/>
            <person name="Lyne R."/>
            <person name="Martin S."/>
            <person name="Mashreghi-Mohammadi M."/>
            <person name="Matthews L."/>
            <person name="Matthews N.S.W."/>
            <person name="McLaren S."/>
            <person name="Milne S."/>
            <person name="Mistry S."/>
            <person name="Moore M.J.F."/>
            <person name="Nickerson T."/>
            <person name="O'Dell C.N."/>
            <person name="Oliver K."/>
            <person name="Palmeiri A."/>
            <person name="Palmer S.A."/>
            <person name="Parker A."/>
            <person name="Patel D."/>
            <person name="Pearce A.V."/>
            <person name="Peck A.I."/>
            <person name="Pelan S."/>
            <person name="Phelps K."/>
            <person name="Phillimore B.J."/>
            <person name="Plumb R."/>
            <person name="Rajan J."/>
            <person name="Raymond C."/>
            <person name="Rouse G."/>
            <person name="Saenphimmachak C."/>
            <person name="Sehra H.K."/>
            <person name="Sheridan E."/>
            <person name="Shownkeen R."/>
            <person name="Sims S."/>
            <person name="Skuce C.D."/>
            <person name="Smith M."/>
            <person name="Steward C."/>
            <person name="Subramanian S."/>
            <person name="Sycamore N."/>
            <person name="Tracey A."/>
            <person name="Tromans A."/>
            <person name="Van Helmond Z."/>
            <person name="Wall M."/>
            <person name="Wallis J.M."/>
            <person name="White S."/>
            <person name="Whitehead S.L."/>
            <person name="Wilkinson J.E."/>
            <person name="Willey D.L."/>
            <person name="Williams H."/>
            <person name="Wilming L."/>
            <person name="Wray P.W."/>
            <person name="Wu Z."/>
            <person name="Coulson A."/>
            <person name="Vaudin M."/>
            <person name="Sulston J.E."/>
            <person name="Durbin R.M."/>
            <person name="Hubbard T."/>
            <person name="Wooster R."/>
            <person name="Dunham I."/>
            <person name="Carter N.P."/>
            <person name="McVean G."/>
            <person name="Ross M.T."/>
            <person name="Harrow J."/>
            <person name="Olson M.V."/>
            <person name="Beck S."/>
            <person name="Rogers J."/>
            <person name="Bentley D.R."/>
        </authorList>
    </citation>
    <scope>NUCLEOTIDE SEQUENCE [LARGE SCALE GENOMIC DNA]</scope>
</reference>
<reference key="3">
    <citation type="journal article" date="2017" name="Protein Sci.">
        <title>BECN2 interacts with ATG14 through a metastable coiled-coil to mediate autophagy.</title>
        <authorList>
            <person name="Su M."/>
            <person name="Li Y."/>
            <person name="Wyborny S."/>
            <person name="Neau D."/>
            <person name="Chakravarthy S."/>
            <person name="Levine B."/>
            <person name="Colbert C.L."/>
            <person name="Sinha S.C."/>
        </authorList>
    </citation>
    <scope>X-RAY CRYSTALLOGRAPHY (2.30 ANGSTROMS) OF 158-246 OF HOMODIMER OF WILD TYPE AND MUTANT LEU-187</scope>
    <scope>COILED-COIL DOMAIN</scope>
    <scope>SUBUNIT</scope>
    <scope>INTERACTION WITH ATG14</scope>
    <scope>MUTAGENESIS OF GLU-173; ASN-187; ALA-190; ALA-197; GLU-208; HIS-211; TYR-215; GLN-222 AND ARG-243</scope>
</reference>
<proteinExistence type="evidence at protein level"/>
<feature type="chain" id="PRO_0000332244" description="Beclin-2">
    <location>
        <begin position="1"/>
        <end position="431"/>
    </location>
</feature>
<feature type="region of interest" description="Disordered" evidence="2">
    <location>
        <begin position="17"/>
        <end position="74"/>
    </location>
</feature>
<feature type="region of interest" description="Required for homodimer formation" evidence="4">
    <location>
        <begin position="173"/>
        <end position="243"/>
    </location>
</feature>
<feature type="coiled-coil region" evidence="1">
    <location>
        <begin position="125"/>
        <end position="248"/>
    </location>
</feature>
<feature type="mutagenesis site" description="Abolishes interaction with GPRASP1/GASP1 and ability to degrade G-protein coupled receptor. Does not affect function in autophagy." evidence="3">
    <original>I</original>
    <variation>S</variation>
    <location>
        <position position="80"/>
    </location>
</feature>
<feature type="mutagenesis site" description="Decreases homodimerization. Decreases interaction with ATG14." evidence="4">
    <original>E</original>
    <variation>L</variation>
    <location>
        <position position="173"/>
    </location>
</feature>
<feature type="mutagenesis site" description="Increases strongly homodimerization. Decreases interaction with ATG14." evidence="4">
    <original>N</original>
    <variation>L</variation>
    <location>
        <position position="187"/>
    </location>
</feature>
<feature type="mutagenesis site" description="Decreases interaction with ATG14. Increases slightly homodimerization; when associated with L-215." evidence="4">
    <original>A</original>
    <variation>L</variation>
    <location>
        <position position="190"/>
    </location>
</feature>
<feature type="mutagenesis site" description="Decreases interaction with ATG14. Probably strongly increases homodimerization; when associated with L-208." evidence="4">
    <original>A</original>
    <variation>L</variation>
    <location>
        <position position="197"/>
    </location>
</feature>
<feature type="mutagenesis site" description="Decreases interaction with ATG14. Probably strongly increases homodimerization; when associated with L-197." evidence="4">
    <original>E</original>
    <variation>L</variation>
    <location>
        <position position="208"/>
    </location>
</feature>
<feature type="mutagenesis site" description="Increases homodimerization. Decreases interaction with ATG14." evidence="4">
    <original>H</original>
    <variation>L</variation>
    <location>
        <position position="211"/>
    </location>
</feature>
<feature type="mutagenesis site" description="Decreases interaction with ATG14. Increases slightly homodimerization; when associated with L-190." evidence="4">
    <original>Y</original>
    <variation>L</variation>
    <location>
        <position position="215"/>
    </location>
</feature>
<feature type="mutagenesis site" description="Decreases homodimerization. Decreases interaction with ATG14." evidence="4">
    <original>Q</original>
    <variation>L</variation>
    <location>
        <position position="222"/>
    </location>
</feature>
<feature type="mutagenesis site" description="Decreases homodimerization. Decreases interaction with ATG14." evidence="4">
    <original>R</original>
    <variation>L</variation>
    <location>
        <position position="243"/>
    </location>
</feature>
<feature type="helix" evidence="9">
    <location>
        <begin position="157"/>
        <end position="245"/>
    </location>
</feature>
<comment type="function">
    <text evidence="3">Involved in 2 distinct lysosomal degradation pathways: acts as a regulator of autophagy and as a regulator of G-protein coupled receptors turnover. Regulates degradation in lysosomes of a variety of G-protein coupled receptors via its interaction with GPRASP1/GASP1.</text>
</comment>
<comment type="subunit">
    <text evidence="3 4">Homodimer (via coiled-coil domain) (PubMed:28218432). Interacts (via coiled-coil domain) with ATG14 (via coiled-coil domain); this interaction is tighter than BECN2 self-association (PubMed:23954414, PubMed:28218432). Interacts with AMBRA1, UVRAG and PIK3C3/VPS34; these interactions are not disrupted by starvation (PubMed:23954414). Does not interact with RUBCN (PubMed:23954414). Interacts (via N-terminus) with GPRASP1/GASP1; the interaction is direct (PubMed:23954414).</text>
</comment>
<comment type="interaction">
    <interactant intactId="EBI-8839517">
        <id>A8MW95</id>
    </interactant>
    <interactant intactId="EBI-2514717">
        <id>Q5JY77</id>
        <label>GPRASP1</label>
    </interactant>
    <organismsDiffer>false</organismsDiffer>
    <experiments>4</experiments>
</comment>
<comment type="subcellular location">
    <subcellularLocation>
        <location evidence="6">Cytoplasm</location>
    </subcellularLocation>
</comment>
<comment type="tissue specificity">
    <text evidence="3">Present in fetal and adult brain (at protein level).</text>
</comment>
<comment type="similarity">
    <text evidence="6">Belongs to the beclin family.</text>
</comment>
<sequence length="431" mass="48153">MSSIRFLCQRCHQALKLSGSSESRSLPAAPAPTSGQAEPGDTREPGVTTREVTDAEEQQDGASSRSPPGDGSVSKGHANIFTLLGELGAMHMLSSIQKAAGDIFDIVSGQAVVDHPLCEECTDSLLEQLDIQLALTEADSQNYQRCLETGELATSEDEAAALRAELRDLELEEARLVQELEDVDRNNARAAADLQAAQAEAAELDQQERQHYRDYSALKRQQLELLDQLGNVENQLQYARVQRDRLKEINCFTATFEIWVEGPLGVINNFRLGRLPTVRVGWNEINTAWGQAALLLLTLANTIGLQFQRYRLIPCGNHSYLKSLTDDRTELPLFCYGGQDVFLNNKYDRAMVAFLDCMQQFKEEAEKGELGLSLPYGIQVETGLMEDVGGRGECYSIRTHLNTQELWTKALKFMLINFKWSLIWVASRYQK</sequence>